<evidence type="ECO:0000255" key="1">
    <source>
        <dbReference type="HAMAP-Rule" id="MF_01306"/>
    </source>
</evidence>
<evidence type="ECO:0000305" key="2"/>
<sequence length="202" mass="23411">MARYTGPMTKKSRRLGVDLVGGDSAYERRPYPPGQHGRGRIKESEYLLQLREKQKARFTYGVLEKQFHNYYTEASRRAGKTGDNLLQLLECRLDNVVYRAGFARTRRHARQLVTHGHFKVNGKKVDIPSFQVTAHDVIDVREKSLEMTPFIVARETHGERVVPAWLEAIPSRMRVLVHQLPVRAQIDIPVQEQLIVEYYSKK</sequence>
<organism>
    <name type="scientific">Nocardioides sp. (strain ATCC BAA-499 / JS614)</name>
    <dbReference type="NCBI Taxonomy" id="196162"/>
    <lineage>
        <taxon>Bacteria</taxon>
        <taxon>Bacillati</taxon>
        <taxon>Actinomycetota</taxon>
        <taxon>Actinomycetes</taxon>
        <taxon>Propionibacteriales</taxon>
        <taxon>Nocardioidaceae</taxon>
        <taxon>Nocardioides</taxon>
    </lineage>
</organism>
<keyword id="KW-1185">Reference proteome</keyword>
<keyword id="KW-0687">Ribonucleoprotein</keyword>
<keyword id="KW-0689">Ribosomal protein</keyword>
<keyword id="KW-0694">RNA-binding</keyword>
<keyword id="KW-0699">rRNA-binding</keyword>
<comment type="function">
    <text evidence="1">One of the primary rRNA binding proteins, it binds directly to 16S rRNA where it nucleates assembly of the body of the 30S subunit.</text>
</comment>
<comment type="function">
    <text evidence="1">With S5 and S12 plays an important role in translational accuracy.</text>
</comment>
<comment type="subunit">
    <text evidence="1">Part of the 30S ribosomal subunit. Contacts protein S5. The interaction surface between S4 and S5 is involved in control of translational fidelity.</text>
</comment>
<comment type="similarity">
    <text evidence="1">Belongs to the universal ribosomal protein uS4 family.</text>
</comment>
<protein>
    <recommendedName>
        <fullName evidence="1">Small ribosomal subunit protein uS4</fullName>
    </recommendedName>
    <alternativeName>
        <fullName evidence="2">30S ribosomal protein S4</fullName>
    </alternativeName>
</protein>
<dbReference type="EMBL" id="CP000509">
    <property type="protein sequence ID" value="ABL83374.1"/>
    <property type="molecule type" value="Genomic_DNA"/>
</dbReference>
<dbReference type="RefSeq" id="WP_011757305.1">
    <property type="nucleotide sequence ID" value="NC_008699.1"/>
</dbReference>
<dbReference type="SMR" id="A1SNI9"/>
<dbReference type="STRING" id="196162.Noca_3876"/>
<dbReference type="KEGG" id="nca:Noca_3876"/>
<dbReference type="eggNOG" id="COG0522">
    <property type="taxonomic scope" value="Bacteria"/>
</dbReference>
<dbReference type="HOGENOM" id="CLU_092403_0_2_11"/>
<dbReference type="OrthoDB" id="9803672at2"/>
<dbReference type="Proteomes" id="UP000000640">
    <property type="component" value="Chromosome"/>
</dbReference>
<dbReference type="GO" id="GO:0015935">
    <property type="term" value="C:small ribosomal subunit"/>
    <property type="evidence" value="ECO:0007669"/>
    <property type="project" value="InterPro"/>
</dbReference>
<dbReference type="GO" id="GO:0019843">
    <property type="term" value="F:rRNA binding"/>
    <property type="evidence" value="ECO:0007669"/>
    <property type="project" value="UniProtKB-UniRule"/>
</dbReference>
<dbReference type="GO" id="GO:0003735">
    <property type="term" value="F:structural constituent of ribosome"/>
    <property type="evidence" value="ECO:0007669"/>
    <property type="project" value="InterPro"/>
</dbReference>
<dbReference type="GO" id="GO:0042274">
    <property type="term" value="P:ribosomal small subunit biogenesis"/>
    <property type="evidence" value="ECO:0007669"/>
    <property type="project" value="TreeGrafter"/>
</dbReference>
<dbReference type="GO" id="GO:0006412">
    <property type="term" value="P:translation"/>
    <property type="evidence" value="ECO:0007669"/>
    <property type="project" value="UniProtKB-UniRule"/>
</dbReference>
<dbReference type="CDD" id="cd00165">
    <property type="entry name" value="S4"/>
    <property type="match status" value="1"/>
</dbReference>
<dbReference type="FunFam" id="1.10.1050.10:FF:000001">
    <property type="entry name" value="30S ribosomal protein S4"/>
    <property type="match status" value="1"/>
</dbReference>
<dbReference type="FunFam" id="3.10.290.10:FF:000001">
    <property type="entry name" value="30S ribosomal protein S4"/>
    <property type="match status" value="1"/>
</dbReference>
<dbReference type="Gene3D" id="1.10.1050.10">
    <property type="entry name" value="Ribosomal Protein S4 Delta 41, Chain A, domain 1"/>
    <property type="match status" value="1"/>
</dbReference>
<dbReference type="Gene3D" id="3.10.290.10">
    <property type="entry name" value="RNA-binding S4 domain"/>
    <property type="match status" value="1"/>
</dbReference>
<dbReference type="HAMAP" id="MF_01306_B">
    <property type="entry name" value="Ribosomal_uS4_B"/>
    <property type="match status" value="1"/>
</dbReference>
<dbReference type="InterPro" id="IPR022801">
    <property type="entry name" value="Ribosomal_uS4"/>
</dbReference>
<dbReference type="InterPro" id="IPR005709">
    <property type="entry name" value="Ribosomal_uS4_bac-type"/>
</dbReference>
<dbReference type="InterPro" id="IPR018079">
    <property type="entry name" value="Ribosomal_uS4_CS"/>
</dbReference>
<dbReference type="InterPro" id="IPR001912">
    <property type="entry name" value="Ribosomal_uS4_N"/>
</dbReference>
<dbReference type="InterPro" id="IPR002942">
    <property type="entry name" value="S4_RNA-bd"/>
</dbReference>
<dbReference type="InterPro" id="IPR036986">
    <property type="entry name" value="S4_RNA-bd_sf"/>
</dbReference>
<dbReference type="NCBIfam" id="NF003717">
    <property type="entry name" value="PRK05327.1"/>
    <property type="match status" value="1"/>
</dbReference>
<dbReference type="NCBIfam" id="TIGR01017">
    <property type="entry name" value="rpsD_bact"/>
    <property type="match status" value="1"/>
</dbReference>
<dbReference type="PANTHER" id="PTHR11831">
    <property type="entry name" value="30S 40S RIBOSOMAL PROTEIN"/>
    <property type="match status" value="1"/>
</dbReference>
<dbReference type="PANTHER" id="PTHR11831:SF4">
    <property type="entry name" value="SMALL RIBOSOMAL SUBUNIT PROTEIN US4M"/>
    <property type="match status" value="1"/>
</dbReference>
<dbReference type="Pfam" id="PF00163">
    <property type="entry name" value="Ribosomal_S4"/>
    <property type="match status" value="1"/>
</dbReference>
<dbReference type="Pfam" id="PF01479">
    <property type="entry name" value="S4"/>
    <property type="match status" value="1"/>
</dbReference>
<dbReference type="SMART" id="SM01390">
    <property type="entry name" value="Ribosomal_S4"/>
    <property type="match status" value="1"/>
</dbReference>
<dbReference type="SMART" id="SM00363">
    <property type="entry name" value="S4"/>
    <property type="match status" value="1"/>
</dbReference>
<dbReference type="SUPFAM" id="SSF55174">
    <property type="entry name" value="Alpha-L RNA-binding motif"/>
    <property type="match status" value="1"/>
</dbReference>
<dbReference type="PROSITE" id="PS00632">
    <property type="entry name" value="RIBOSOMAL_S4"/>
    <property type="match status" value="1"/>
</dbReference>
<dbReference type="PROSITE" id="PS50889">
    <property type="entry name" value="S4"/>
    <property type="match status" value="1"/>
</dbReference>
<accession>A1SNI9</accession>
<proteinExistence type="inferred from homology"/>
<name>RS4_NOCSJ</name>
<reference key="1">
    <citation type="submission" date="2006-12" db="EMBL/GenBank/DDBJ databases">
        <title>Complete sequence of chromosome 1 of Nocardioides sp. JS614.</title>
        <authorList>
            <person name="Copeland A."/>
            <person name="Lucas S."/>
            <person name="Lapidus A."/>
            <person name="Barry K."/>
            <person name="Detter J.C."/>
            <person name="Glavina del Rio T."/>
            <person name="Hammon N."/>
            <person name="Israni S."/>
            <person name="Dalin E."/>
            <person name="Tice H."/>
            <person name="Pitluck S."/>
            <person name="Thompson L.S."/>
            <person name="Brettin T."/>
            <person name="Bruce D."/>
            <person name="Han C."/>
            <person name="Tapia R."/>
            <person name="Schmutz J."/>
            <person name="Larimer F."/>
            <person name="Land M."/>
            <person name="Hauser L."/>
            <person name="Kyrpides N."/>
            <person name="Kim E."/>
            <person name="Mattes T."/>
            <person name="Gossett J."/>
            <person name="Richardson P."/>
        </authorList>
    </citation>
    <scope>NUCLEOTIDE SEQUENCE [LARGE SCALE GENOMIC DNA]</scope>
    <source>
        <strain>ATCC BAA-499 / JS614</strain>
    </source>
</reference>
<gene>
    <name evidence="1" type="primary">rpsD</name>
    <name type="ordered locus">Noca_3876</name>
</gene>
<feature type="chain" id="PRO_0000293327" description="Small ribosomal subunit protein uS4">
    <location>
        <begin position="1"/>
        <end position="202"/>
    </location>
</feature>
<feature type="domain" description="S4 RNA-binding" evidence="1">
    <location>
        <begin position="91"/>
        <end position="157"/>
    </location>
</feature>